<gene>
    <name type="primary">ydcY</name>
    <name type="ordered locus">b1446</name>
    <name type="ordered locus">JW1441</name>
</gene>
<sequence>MSHLDEVIARVDAAIEESVIAHMNELLIALSDDAELSREDRYTQQQRLRTAIAHHGRKHKEDMEARHEQLTKGGTIL</sequence>
<proteinExistence type="evidence at protein level"/>
<dbReference type="EMBL" id="U00096">
    <property type="protein sequence ID" value="AAC74528.1"/>
    <property type="molecule type" value="Genomic_DNA"/>
</dbReference>
<dbReference type="EMBL" id="AP009048">
    <property type="protein sequence ID" value="BAE76442.1"/>
    <property type="molecule type" value="Genomic_DNA"/>
</dbReference>
<dbReference type="PIR" id="A64897">
    <property type="entry name" value="A64897"/>
</dbReference>
<dbReference type="RefSeq" id="NP_415963.1">
    <property type="nucleotide sequence ID" value="NC_000913.3"/>
</dbReference>
<dbReference type="RefSeq" id="WP_000018633.1">
    <property type="nucleotide sequence ID" value="NZ_STEB01000043.1"/>
</dbReference>
<dbReference type="SMR" id="P64455"/>
<dbReference type="BioGRID" id="4259108">
    <property type="interactions" value="5"/>
</dbReference>
<dbReference type="BioGRID" id="850281">
    <property type="interactions" value="8"/>
</dbReference>
<dbReference type="DIP" id="DIP-47884N"/>
<dbReference type="FunCoup" id="P64455">
    <property type="interactions" value="17"/>
</dbReference>
<dbReference type="IntAct" id="P64455">
    <property type="interactions" value="9"/>
</dbReference>
<dbReference type="STRING" id="511145.b1446"/>
<dbReference type="jPOST" id="P64455"/>
<dbReference type="PaxDb" id="511145-b1446"/>
<dbReference type="EnsemblBacteria" id="AAC74528">
    <property type="protein sequence ID" value="AAC74528"/>
    <property type="gene ID" value="b1446"/>
</dbReference>
<dbReference type="GeneID" id="93775594"/>
<dbReference type="GeneID" id="945916"/>
<dbReference type="KEGG" id="ecj:JW1441"/>
<dbReference type="KEGG" id="eco:b1446"/>
<dbReference type="KEGG" id="ecoc:C3026_08415"/>
<dbReference type="PATRIC" id="fig|511145.12.peg.1512"/>
<dbReference type="EchoBASE" id="EB3531"/>
<dbReference type="eggNOG" id="ENOG5032T8Y">
    <property type="taxonomic scope" value="Bacteria"/>
</dbReference>
<dbReference type="HOGENOM" id="CLU_195139_0_0_6"/>
<dbReference type="InParanoid" id="P64455"/>
<dbReference type="OMA" id="HGRQHKE"/>
<dbReference type="OrthoDB" id="6540008at2"/>
<dbReference type="PhylomeDB" id="P64455"/>
<dbReference type="BioCyc" id="EcoCyc:G6757-MONOMER"/>
<dbReference type="PRO" id="PR:P64455"/>
<dbReference type="Proteomes" id="UP000000625">
    <property type="component" value="Chromosome"/>
</dbReference>
<dbReference type="GO" id="GO:0005829">
    <property type="term" value="C:cytosol"/>
    <property type="evidence" value="ECO:0000314"/>
    <property type="project" value="EcoCyc"/>
</dbReference>
<dbReference type="InterPro" id="IPR019671">
    <property type="entry name" value="DUF2526"/>
</dbReference>
<dbReference type="Pfam" id="PF10735">
    <property type="entry name" value="DUF2526"/>
    <property type="match status" value="1"/>
</dbReference>
<comment type="interaction">
    <interactant intactId="EBI-9129853">
        <id>P64455</id>
    </interactant>
    <interactant intactId="EBI-1114060">
        <id>P0A9N4</id>
        <label>pflA</label>
    </interactant>
    <organismsDiffer>false</organismsDiffer>
    <experiments>4</experiments>
</comment>
<evidence type="ECO:0000256" key="1">
    <source>
        <dbReference type="SAM" id="MobiDB-lite"/>
    </source>
</evidence>
<protein>
    <recommendedName>
        <fullName>Uncharacterized protein YdcY</fullName>
    </recommendedName>
</protein>
<feature type="chain" id="PRO_0000168935" description="Uncharacterized protein YdcY">
    <location>
        <begin position="1"/>
        <end position="77"/>
    </location>
</feature>
<feature type="region of interest" description="Disordered" evidence="1">
    <location>
        <begin position="54"/>
        <end position="77"/>
    </location>
</feature>
<feature type="compositionally biased region" description="Basic and acidic residues" evidence="1">
    <location>
        <begin position="59"/>
        <end position="70"/>
    </location>
</feature>
<organism>
    <name type="scientific">Escherichia coli (strain K12)</name>
    <dbReference type="NCBI Taxonomy" id="83333"/>
    <lineage>
        <taxon>Bacteria</taxon>
        <taxon>Pseudomonadati</taxon>
        <taxon>Pseudomonadota</taxon>
        <taxon>Gammaproteobacteria</taxon>
        <taxon>Enterobacterales</taxon>
        <taxon>Enterobacteriaceae</taxon>
        <taxon>Escherichia</taxon>
    </lineage>
</organism>
<reference key="1">
    <citation type="journal article" date="1997" name="Science">
        <title>The complete genome sequence of Escherichia coli K-12.</title>
        <authorList>
            <person name="Blattner F.R."/>
            <person name="Plunkett G. III"/>
            <person name="Bloch C.A."/>
            <person name="Perna N.T."/>
            <person name="Burland V."/>
            <person name="Riley M."/>
            <person name="Collado-Vides J."/>
            <person name="Glasner J.D."/>
            <person name="Rode C.K."/>
            <person name="Mayhew G.F."/>
            <person name="Gregor J."/>
            <person name="Davis N.W."/>
            <person name="Kirkpatrick H.A."/>
            <person name="Goeden M.A."/>
            <person name="Rose D.J."/>
            <person name="Mau B."/>
            <person name="Shao Y."/>
        </authorList>
    </citation>
    <scope>NUCLEOTIDE SEQUENCE [LARGE SCALE GENOMIC DNA]</scope>
    <source>
        <strain>K12 / MG1655 / ATCC 47076</strain>
    </source>
</reference>
<reference key="2">
    <citation type="journal article" date="2006" name="Mol. Syst. Biol.">
        <title>Highly accurate genome sequences of Escherichia coli K-12 strains MG1655 and W3110.</title>
        <authorList>
            <person name="Hayashi K."/>
            <person name="Morooka N."/>
            <person name="Yamamoto Y."/>
            <person name="Fujita K."/>
            <person name="Isono K."/>
            <person name="Choi S."/>
            <person name="Ohtsubo E."/>
            <person name="Baba T."/>
            <person name="Wanner B.L."/>
            <person name="Mori H."/>
            <person name="Horiuchi T."/>
        </authorList>
    </citation>
    <scope>NUCLEOTIDE SEQUENCE [LARGE SCALE GENOMIC DNA]</scope>
    <source>
        <strain>K12 / W3110 / ATCC 27325 / DSM 5911</strain>
    </source>
</reference>
<keyword id="KW-1185">Reference proteome</keyword>
<accession>P64455</accession>
<accession>P76110</accession>
<accession>Q2MBB4</accession>
<name>YDCY_ECOLI</name>